<reference key="1">
    <citation type="journal article" date="2009" name="PLoS ONE">
        <title>Salmonella paratyphi C: genetic divergence from Salmonella choleraesuis and pathogenic convergence with Salmonella typhi.</title>
        <authorList>
            <person name="Liu W.-Q."/>
            <person name="Feng Y."/>
            <person name="Wang Y."/>
            <person name="Zou Q.-H."/>
            <person name="Chen F."/>
            <person name="Guo J.-T."/>
            <person name="Peng Y.-H."/>
            <person name="Jin Y."/>
            <person name="Li Y.-G."/>
            <person name="Hu S.-N."/>
            <person name="Johnston R.N."/>
            <person name="Liu G.-R."/>
            <person name="Liu S.-L."/>
        </authorList>
    </citation>
    <scope>NUCLEOTIDE SEQUENCE [LARGE SCALE GENOMIC DNA]</scope>
    <source>
        <strain>RKS4594</strain>
    </source>
</reference>
<gene>
    <name evidence="1" type="primary">rpsS</name>
    <name type="ordered locus">SPC_3505</name>
</gene>
<sequence>MPRSLKKGPFIDLHLLKKVEKAVESGDKKPLRTWSRRSTIFPNMIGLTIAVHNGRQHVPVFVSDEMVGHKLGEFAPTRTYRGHAADKKAKKK</sequence>
<accession>C0Q0B2</accession>
<dbReference type="EMBL" id="CP000857">
    <property type="protein sequence ID" value="ACN47589.1"/>
    <property type="molecule type" value="Genomic_DNA"/>
</dbReference>
<dbReference type="RefSeq" id="WP_001138115.1">
    <property type="nucleotide sequence ID" value="NC_012125.1"/>
</dbReference>
<dbReference type="SMR" id="C0Q0B2"/>
<dbReference type="GeneID" id="97603665"/>
<dbReference type="KEGG" id="sei:SPC_3505"/>
<dbReference type="HOGENOM" id="CLU_144911_0_1_6"/>
<dbReference type="Proteomes" id="UP000001599">
    <property type="component" value="Chromosome"/>
</dbReference>
<dbReference type="GO" id="GO:0005737">
    <property type="term" value="C:cytoplasm"/>
    <property type="evidence" value="ECO:0007669"/>
    <property type="project" value="UniProtKB-ARBA"/>
</dbReference>
<dbReference type="GO" id="GO:0015935">
    <property type="term" value="C:small ribosomal subunit"/>
    <property type="evidence" value="ECO:0007669"/>
    <property type="project" value="InterPro"/>
</dbReference>
<dbReference type="GO" id="GO:0019843">
    <property type="term" value="F:rRNA binding"/>
    <property type="evidence" value="ECO:0007669"/>
    <property type="project" value="UniProtKB-UniRule"/>
</dbReference>
<dbReference type="GO" id="GO:0003735">
    <property type="term" value="F:structural constituent of ribosome"/>
    <property type="evidence" value="ECO:0007669"/>
    <property type="project" value="InterPro"/>
</dbReference>
<dbReference type="GO" id="GO:0000028">
    <property type="term" value="P:ribosomal small subunit assembly"/>
    <property type="evidence" value="ECO:0007669"/>
    <property type="project" value="TreeGrafter"/>
</dbReference>
<dbReference type="GO" id="GO:0006412">
    <property type="term" value="P:translation"/>
    <property type="evidence" value="ECO:0007669"/>
    <property type="project" value="UniProtKB-UniRule"/>
</dbReference>
<dbReference type="FunFam" id="3.30.860.10:FF:000001">
    <property type="entry name" value="30S ribosomal protein S19"/>
    <property type="match status" value="1"/>
</dbReference>
<dbReference type="Gene3D" id="3.30.860.10">
    <property type="entry name" value="30s Ribosomal Protein S19, Chain A"/>
    <property type="match status" value="1"/>
</dbReference>
<dbReference type="HAMAP" id="MF_00531">
    <property type="entry name" value="Ribosomal_uS19"/>
    <property type="match status" value="1"/>
</dbReference>
<dbReference type="InterPro" id="IPR002222">
    <property type="entry name" value="Ribosomal_uS19"/>
</dbReference>
<dbReference type="InterPro" id="IPR005732">
    <property type="entry name" value="Ribosomal_uS19_bac-type"/>
</dbReference>
<dbReference type="InterPro" id="IPR020934">
    <property type="entry name" value="Ribosomal_uS19_CS"/>
</dbReference>
<dbReference type="InterPro" id="IPR023575">
    <property type="entry name" value="Ribosomal_uS19_SF"/>
</dbReference>
<dbReference type="NCBIfam" id="TIGR01050">
    <property type="entry name" value="rpsS_bact"/>
    <property type="match status" value="1"/>
</dbReference>
<dbReference type="PANTHER" id="PTHR11880">
    <property type="entry name" value="RIBOSOMAL PROTEIN S19P FAMILY MEMBER"/>
    <property type="match status" value="1"/>
</dbReference>
<dbReference type="PANTHER" id="PTHR11880:SF8">
    <property type="entry name" value="SMALL RIBOSOMAL SUBUNIT PROTEIN US19M"/>
    <property type="match status" value="1"/>
</dbReference>
<dbReference type="Pfam" id="PF00203">
    <property type="entry name" value="Ribosomal_S19"/>
    <property type="match status" value="1"/>
</dbReference>
<dbReference type="PIRSF" id="PIRSF002144">
    <property type="entry name" value="Ribosomal_S19"/>
    <property type="match status" value="1"/>
</dbReference>
<dbReference type="PRINTS" id="PR00975">
    <property type="entry name" value="RIBOSOMALS19"/>
</dbReference>
<dbReference type="SUPFAM" id="SSF54570">
    <property type="entry name" value="Ribosomal protein S19"/>
    <property type="match status" value="1"/>
</dbReference>
<dbReference type="PROSITE" id="PS00323">
    <property type="entry name" value="RIBOSOMAL_S19"/>
    <property type="match status" value="1"/>
</dbReference>
<evidence type="ECO:0000255" key="1">
    <source>
        <dbReference type="HAMAP-Rule" id="MF_00531"/>
    </source>
</evidence>
<evidence type="ECO:0000305" key="2"/>
<name>RS19_SALPC</name>
<proteinExistence type="inferred from homology"/>
<keyword id="KW-0687">Ribonucleoprotein</keyword>
<keyword id="KW-0689">Ribosomal protein</keyword>
<keyword id="KW-0694">RNA-binding</keyword>
<keyword id="KW-0699">rRNA-binding</keyword>
<protein>
    <recommendedName>
        <fullName evidence="1">Small ribosomal subunit protein uS19</fullName>
    </recommendedName>
    <alternativeName>
        <fullName evidence="2">30S ribosomal protein S19</fullName>
    </alternativeName>
</protein>
<comment type="function">
    <text evidence="1">Protein S19 forms a complex with S13 that binds strongly to the 16S ribosomal RNA.</text>
</comment>
<comment type="similarity">
    <text evidence="1">Belongs to the universal ribosomal protein uS19 family.</text>
</comment>
<feature type="chain" id="PRO_1000146410" description="Small ribosomal subunit protein uS19">
    <location>
        <begin position="1"/>
        <end position="92"/>
    </location>
</feature>
<organism>
    <name type="scientific">Salmonella paratyphi C (strain RKS4594)</name>
    <dbReference type="NCBI Taxonomy" id="476213"/>
    <lineage>
        <taxon>Bacteria</taxon>
        <taxon>Pseudomonadati</taxon>
        <taxon>Pseudomonadota</taxon>
        <taxon>Gammaproteobacteria</taxon>
        <taxon>Enterobacterales</taxon>
        <taxon>Enterobacteriaceae</taxon>
        <taxon>Salmonella</taxon>
    </lineage>
</organism>